<name>GCS2_BORA1</name>
<keyword id="KW-0067">ATP-binding</keyword>
<keyword id="KW-0436">Ligase</keyword>
<keyword id="KW-0547">Nucleotide-binding</keyword>
<keyword id="KW-1185">Reference proteome</keyword>
<comment type="function">
    <text evidence="1">ATP-dependent carboxylate-amine ligase which exhibits weak glutamate--cysteine ligase activity.</text>
</comment>
<comment type="catalytic activity">
    <reaction evidence="1">
        <text>L-cysteine + L-glutamate + ATP = gamma-L-glutamyl-L-cysteine + ADP + phosphate + H(+)</text>
        <dbReference type="Rhea" id="RHEA:13285"/>
        <dbReference type="ChEBI" id="CHEBI:15378"/>
        <dbReference type="ChEBI" id="CHEBI:29985"/>
        <dbReference type="ChEBI" id="CHEBI:30616"/>
        <dbReference type="ChEBI" id="CHEBI:35235"/>
        <dbReference type="ChEBI" id="CHEBI:43474"/>
        <dbReference type="ChEBI" id="CHEBI:58173"/>
        <dbReference type="ChEBI" id="CHEBI:456216"/>
        <dbReference type="EC" id="6.3.2.2"/>
    </reaction>
</comment>
<comment type="similarity">
    <text evidence="1">Belongs to the glutamate--cysteine ligase type 2 family. YbdK subfamily.</text>
</comment>
<proteinExistence type="inferred from homology"/>
<sequence length="403" mass="44789">MEQIPFVSSSPNTLGIELELQLIDPAGFDLAAASDELLAQLANHPVADRIKPEITRSMIELNSSVHEHPAGLLAEMREMRDALCEAADAVGVSVSGGGTHPFMRWQERTISDTPRFQYLAEMYGYLARQFTVFGQHIHLGVPSGDAAVRLVHGLSPYVPHFIALSASSPYREGVDTLFSCARLNAVNSFPLAGHLPPEVADWYHFEAHIAQLRASGLAESIKDLYWDIRPKPEFGTVEIRVCDTPLTVERACQLAAFAQALAVLLEREPSPPTQAWLAYRSNHFQACRFGLHGSYVTPGGQRVRLADHLKALFVRLMPVAEELGTTDILQSLRDEMQRGGNDARWLRAQFHRTRELSGTVEAMTQVFRGESAAQRRAPQAARRRIRASSEPLGPMSMWPERLH</sequence>
<organism>
    <name type="scientific">Bordetella avium (strain 197N)</name>
    <dbReference type="NCBI Taxonomy" id="360910"/>
    <lineage>
        <taxon>Bacteria</taxon>
        <taxon>Pseudomonadati</taxon>
        <taxon>Pseudomonadota</taxon>
        <taxon>Betaproteobacteria</taxon>
        <taxon>Burkholderiales</taxon>
        <taxon>Alcaligenaceae</taxon>
        <taxon>Bordetella</taxon>
    </lineage>
</organism>
<accession>Q2L0C4</accession>
<gene>
    <name type="ordered locus">BAV0234</name>
</gene>
<protein>
    <recommendedName>
        <fullName evidence="1">Putative glutamate--cysteine ligase 2</fullName>
        <ecNumber evidence="1">6.3.2.2</ecNumber>
    </recommendedName>
    <alternativeName>
        <fullName evidence="1">Gamma-glutamylcysteine synthetase 2</fullName>
        <shortName evidence="1">GCS 2</shortName>
        <shortName evidence="1">Gamma-GCS 2</shortName>
    </alternativeName>
</protein>
<reference key="1">
    <citation type="journal article" date="2006" name="J. Bacteriol.">
        <title>Comparison of the genome sequence of the poultry pathogen Bordetella avium with those of B. bronchiseptica, B. pertussis, and B. parapertussis reveals extensive diversity in surface structures associated with host interaction.</title>
        <authorList>
            <person name="Sebaihia M."/>
            <person name="Preston A."/>
            <person name="Maskell D.J."/>
            <person name="Kuzmiak H."/>
            <person name="Connell T.D."/>
            <person name="King N.D."/>
            <person name="Orndorff P.E."/>
            <person name="Miyamoto D.M."/>
            <person name="Thomson N.R."/>
            <person name="Harris D."/>
            <person name="Goble A."/>
            <person name="Lord A."/>
            <person name="Murphy L."/>
            <person name="Quail M.A."/>
            <person name="Rutter S."/>
            <person name="Squares R."/>
            <person name="Squares S."/>
            <person name="Woodward J."/>
            <person name="Parkhill J."/>
            <person name="Temple L.M."/>
        </authorList>
    </citation>
    <scope>NUCLEOTIDE SEQUENCE [LARGE SCALE GENOMIC DNA]</scope>
    <source>
        <strain>197N</strain>
    </source>
</reference>
<feature type="chain" id="PRO_0000255792" description="Putative glutamate--cysteine ligase 2">
    <location>
        <begin position="1"/>
        <end position="403"/>
    </location>
</feature>
<feature type="region of interest" description="Disordered" evidence="2">
    <location>
        <begin position="370"/>
        <end position="403"/>
    </location>
</feature>
<evidence type="ECO:0000255" key="1">
    <source>
        <dbReference type="HAMAP-Rule" id="MF_01609"/>
    </source>
</evidence>
<evidence type="ECO:0000256" key="2">
    <source>
        <dbReference type="SAM" id="MobiDB-lite"/>
    </source>
</evidence>
<dbReference type="EC" id="6.3.2.2" evidence="1"/>
<dbReference type="EMBL" id="AM167904">
    <property type="protein sequence ID" value="CAJ47839.1"/>
    <property type="molecule type" value="Genomic_DNA"/>
</dbReference>
<dbReference type="RefSeq" id="WP_012415937.1">
    <property type="nucleotide sequence ID" value="NC_010645.1"/>
</dbReference>
<dbReference type="SMR" id="Q2L0C4"/>
<dbReference type="STRING" id="360910.BAV0234"/>
<dbReference type="GeneID" id="92936518"/>
<dbReference type="KEGG" id="bav:BAV0234"/>
<dbReference type="eggNOG" id="COG2170">
    <property type="taxonomic scope" value="Bacteria"/>
</dbReference>
<dbReference type="HOGENOM" id="CLU_044848_1_1_4"/>
<dbReference type="OrthoDB" id="9769628at2"/>
<dbReference type="Proteomes" id="UP000001977">
    <property type="component" value="Chromosome"/>
</dbReference>
<dbReference type="GO" id="GO:0005524">
    <property type="term" value="F:ATP binding"/>
    <property type="evidence" value="ECO:0007669"/>
    <property type="project" value="UniProtKB-KW"/>
</dbReference>
<dbReference type="GO" id="GO:0004357">
    <property type="term" value="F:glutamate-cysteine ligase activity"/>
    <property type="evidence" value="ECO:0007669"/>
    <property type="project" value="UniProtKB-EC"/>
</dbReference>
<dbReference type="GO" id="GO:0042398">
    <property type="term" value="P:modified amino acid biosynthetic process"/>
    <property type="evidence" value="ECO:0007669"/>
    <property type="project" value="InterPro"/>
</dbReference>
<dbReference type="Gene3D" id="3.30.590.20">
    <property type="match status" value="1"/>
</dbReference>
<dbReference type="HAMAP" id="MF_01609">
    <property type="entry name" value="Glu_cys_ligase_2"/>
    <property type="match status" value="1"/>
</dbReference>
<dbReference type="InterPro" id="IPR050141">
    <property type="entry name" value="GCL_type2/YbdK_subfam"/>
</dbReference>
<dbReference type="InterPro" id="IPR006336">
    <property type="entry name" value="GCS2"/>
</dbReference>
<dbReference type="InterPro" id="IPR014746">
    <property type="entry name" value="Gln_synth/guanido_kin_cat_dom"/>
</dbReference>
<dbReference type="InterPro" id="IPR011793">
    <property type="entry name" value="YbdK"/>
</dbReference>
<dbReference type="NCBIfam" id="TIGR02050">
    <property type="entry name" value="gshA_cyan_rel"/>
    <property type="match status" value="1"/>
</dbReference>
<dbReference type="NCBIfam" id="NF010040">
    <property type="entry name" value="PRK13516.1"/>
    <property type="match status" value="1"/>
</dbReference>
<dbReference type="PANTHER" id="PTHR36510">
    <property type="entry name" value="GLUTAMATE--CYSTEINE LIGASE 2-RELATED"/>
    <property type="match status" value="1"/>
</dbReference>
<dbReference type="PANTHER" id="PTHR36510:SF1">
    <property type="entry name" value="GLUTAMATE--CYSTEINE LIGASE 2-RELATED"/>
    <property type="match status" value="1"/>
</dbReference>
<dbReference type="Pfam" id="PF04107">
    <property type="entry name" value="GCS2"/>
    <property type="match status" value="1"/>
</dbReference>
<dbReference type="SUPFAM" id="SSF55931">
    <property type="entry name" value="Glutamine synthetase/guanido kinase"/>
    <property type="match status" value="1"/>
</dbReference>